<evidence type="ECO:0000250" key="1"/>
<evidence type="ECO:0000255" key="2"/>
<evidence type="ECO:0000256" key="3">
    <source>
        <dbReference type="SAM" id="MobiDB-lite"/>
    </source>
</evidence>
<evidence type="ECO:0000305" key="4"/>
<comment type="function">
    <text evidence="1">Required for the maintenance of the structure of the mitochondrial inner membrane. Involved in mitochondrial morphology. Causes growth arrest when highly overexpressed (By similarity).</text>
</comment>
<comment type="subunit">
    <text evidence="1">Homooligomer.</text>
</comment>
<comment type="subcellular location">
    <subcellularLocation>
        <location evidence="1">Mitochondrion inner membrane</location>
        <topology evidence="1">Multi-pass membrane protein</topology>
    </subcellularLocation>
</comment>
<comment type="similarity">
    <text evidence="4">Belongs to the SHE9 family.</text>
</comment>
<name>SHE9_COCIM</name>
<keyword id="KW-0175">Coiled coil</keyword>
<keyword id="KW-0472">Membrane</keyword>
<keyword id="KW-0496">Mitochondrion</keyword>
<keyword id="KW-0999">Mitochondrion inner membrane</keyword>
<keyword id="KW-1185">Reference proteome</keyword>
<keyword id="KW-0809">Transit peptide</keyword>
<keyword id="KW-0812">Transmembrane</keyword>
<keyword id="KW-1133">Transmembrane helix</keyword>
<protein>
    <recommendedName>
        <fullName>Sensitive to high expression protein 9 homolog, mitochondrial</fullName>
    </recommendedName>
</protein>
<dbReference type="EMBL" id="GG704911">
    <property type="protein sequence ID" value="EAS35344.3"/>
    <property type="molecule type" value="Genomic_DNA"/>
</dbReference>
<dbReference type="RefSeq" id="XP_001246927.2">
    <property type="nucleotide sequence ID" value="XM_001246926.2"/>
</dbReference>
<dbReference type="SMR" id="Q1E9R5"/>
<dbReference type="FunCoup" id="Q1E9R5">
    <property type="interactions" value="48"/>
</dbReference>
<dbReference type="GeneID" id="4565738"/>
<dbReference type="KEGG" id="cim:CIMG_00698"/>
<dbReference type="VEuPathDB" id="FungiDB:CIMG_00698"/>
<dbReference type="InParanoid" id="Q1E9R5"/>
<dbReference type="OMA" id="ERYMALI"/>
<dbReference type="OrthoDB" id="5595506at2759"/>
<dbReference type="Proteomes" id="UP000001261">
    <property type="component" value="Unassembled WGS sequence"/>
</dbReference>
<dbReference type="GO" id="GO:0005743">
    <property type="term" value="C:mitochondrial inner membrane"/>
    <property type="evidence" value="ECO:0007669"/>
    <property type="project" value="UniProtKB-SubCell"/>
</dbReference>
<dbReference type="GO" id="GO:0007007">
    <property type="term" value="P:inner mitochondrial membrane organization"/>
    <property type="evidence" value="ECO:0007669"/>
    <property type="project" value="TreeGrafter"/>
</dbReference>
<dbReference type="InterPro" id="IPR008839">
    <property type="entry name" value="MDM33_fungi"/>
</dbReference>
<dbReference type="PANTHER" id="PTHR31961">
    <property type="entry name" value="SENSITIVE TO HIGH EXPRESSION PROTEIN 9, MITOCHONDRIAL"/>
    <property type="match status" value="1"/>
</dbReference>
<dbReference type="PANTHER" id="PTHR31961:SF3">
    <property type="entry name" value="SENSITIVE TO HIGH EXPRESSION PROTEIN 9, MITOCHONDRIAL"/>
    <property type="match status" value="1"/>
</dbReference>
<dbReference type="Pfam" id="PF05546">
    <property type="entry name" value="She9_MDM33"/>
    <property type="match status" value="1"/>
</dbReference>
<organism>
    <name type="scientific">Coccidioides immitis (strain RS)</name>
    <name type="common">Valley fever fungus</name>
    <dbReference type="NCBI Taxonomy" id="246410"/>
    <lineage>
        <taxon>Eukaryota</taxon>
        <taxon>Fungi</taxon>
        <taxon>Dikarya</taxon>
        <taxon>Ascomycota</taxon>
        <taxon>Pezizomycotina</taxon>
        <taxon>Eurotiomycetes</taxon>
        <taxon>Eurotiomycetidae</taxon>
        <taxon>Onygenales</taxon>
        <taxon>Onygenaceae</taxon>
        <taxon>Coccidioides</taxon>
    </lineage>
</organism>
<gene>
    <name type="primary">SHE9</name>
    <name type="ORF">CIMG_00698</name>
</gene>
<feature type="transit peptide" description="Mitochondrion" evidence="2">
    <location>
        <begin position="1"/>
        <end position="65"/>
    </location>
</feature>
<feature type="chain" id="PRO_0000351054" description="Sensitive to high expression protein 9 homolog, mitochondrial">
    <location>
        <begin position="66"/>
        <end position="488"/>
    </location>
</feature>
<feature type="topological domain" description="Mitochondrial matrix" evidence="2">
    <location>
        <begin position="66"/>
        <end position="299"/>
    </location>
</feature>
<feature type="transmembrane region" description="Helical" evidence="2">
    <location>
        <begin position="300"/>
        <end position="320"/>
    </location>
</feature>
<feature type="topological domain" description="Mitochondrial intermembrane" evidence="2">
    <location>
        <begin position="321"/>
        <end position="464"/>
    </location>
</feature>
<feature type="transmembrane region" description="Helical" evidence="2">
    <location>
        <begin position="465"/>
        <end position="485"/>
    </location>
</feature>
<feature type="topological domain" description="Mitochondrial matrix" evidence="2">
    <location>
        <begin position="486"/>
        <end position="488"/>
    </location>
</feature>
<feature type="region of interest" description="Disordered" evidence="3">
    <location>
        <begin position="66"/>
        <end position="147"/>
    </location>
</feature>
<feature type="region of interest" description="Disordered" evidence="3">
    <location>
        <begin position="343"/>
        <end position="423"/>
    </location>
</feature>
<feature type="coiled-coil region" evidence="2">
    <location>
        <begin position="179"/>
        <end position="212"/>
    </location>
</feature>
<feature type="coiled-coil region" evidence="2">
    <location>
        <begin position="250"/>
        <end position="279"/>
    </location>
</feature>
<feature type="compositionally biased region" description="Low complexity" evidence="3">
    <location>
        <begin position="101"/>
        <end position="110"/>
    </location>
</feature>
<feature type="compositionally biased region" description="Basic and acidic residues" evidence="3">
    <location>
        <begin position="111"/>
        <end position="130"/>
    </location>
</feature>
<feature type="compositionally biased region" description="Basic and acidic residues" evidence="3">
    <location>
        <begin position="343"/>
        <end position="357"/>
    </location>
</feature>
<feature type="compositionally biased region" description="Polar residues" evidence="3">
    <location>
        <begin position="383"/>
        <end position="400"/>
    </location>
</feature>
<feature type="compositionally biased region" description="Acidic residues" evidence="3">
    <location>
        <begin position="410"/>
        <end position="422"/>
    </location>
</feature>
<reference key="1">
    <citation type="journal article" date="2009" name="Genome Res.">
        <title>Comparative genomic analyses of the human fungal pathogens Coccidioides and their relatives.</title>
        <authorList>
            <person name="Sharpton T.J."/>
            <person name="Stajich J.E."/>
            <person name="Rounsley S.D."/>
            <person name="Gardner M.J."/>
            <person name="Wortman J.R."/>
            <person name="Jordar V.S."/>
            <person name="Maiti R."/>
            <person name="Kodira C.D."/>
            <person name="Neafsey D.E."/>
            <person name="Zeng Q."/>
            <person name="Hung C.-Y."/>
            <person name="McMahan C."/>
            <person name="Muszewska A."/>
            <person name="Grynberg M."/>
            <person name="Mandel M.A."/>
            <person name="Kellner E.M."/>
            <person name="Barker B.M."/>
            <person name="Galgiani J.N."/>
            <person name="Orbach M.J."/>
            <person name="Kirkland T.N."/>
            <person name="Cole G.T."/>
            <person name="Henn M.R."/>
            <person name="Birren B.W."/>
            <person name="Taylor J.W."/>
        </authorList>
    </citation>
    <scope>NUCLEOTIDE SEQUENCE [LARGE SCALE GENOMIC DNA]</scope>
    <source>
        <strain>RS</strain>
    </source>
</reference>
<reference key="2">
    <citation type="journal article" date="2010" name="Genome Res.">
        <title>Population genomic sequencing of Coccidioides fungi reveals recent hybridization and transposon control.</title>
        <authorList>
            <person name="Neafsey D.E."/>
            <person name="Barker B.M."/>
            <person name="Sharpton T.J."/>
            <person name="Stajich J.E."/>
            <person name="Park D.J."/>
            <person name="Whiston E."/>
            <person name="Hung C.-Y."/>
            <person name="McMahan C."/>
            <person name="White J."/>
            <person name="Sykes S."/>
            <person name="Heiman D."/>
            <person name="Young S."/>
            <person name="Zeng Q."/>
            <person name="Abouelleil A."/>
            <person name="Aftuck L."/>
            <person name="Bessette D."/>
            <person name="Brown A."/>
            <person name="FitzGerald M."/>
            <person name="Lui A."/>
            <person name="Macdonald J.P."/>
            <person name="Priest M."/>
            <person name="Orbach M.J."/>
            <person name="Galgiani J.N."/>
            <person name="Kirkland T.N."/>
            <person name="Cole G.T."/>
            <person name="Birren B.W."/>
            <person name="Henn M.R."/>
            <person name="Taylor J.W."/>
            <person name="Rounsley S.D."/>
        </authorList>
    </citation>
    <scope>GENOME REANNOTATION</scope>
    <source>
        <strain>RS</strain>
    </source>
</reference>
<proteinExistence type="inferred from homology"/>
<accession>Q1E9R5</accession>
<accession>J3KHN6</accession>
<sequence length="488" mass="54255">MHTLPLLFRHSLRTGAGFAKSTSPNHVSTTSFVVKLAPPRQRSRLGYVDASICLRCQFRAQTRFYSVQGDGGGSGKENKEGGSLEGGNPTSSTDAKRDQTSSPDSSSALKSSDKSQAEESKDGPESRKEDSEAETGGSLPSHWESRRSHLSKQFSQLMDNLQSNIFIANRHLNDLTGYSAIEALKKNIVAQEEHVRQTRTRVREAKDAYSAAINRRSASQREVNELLQRKHAWTPTDLERFTSLYRSDHANERAETEAQDALMAAEREAEEAAGLLSKSILSRYHEEQIWSDKIRRMSTWGTWGLMGVNVLLFLIFQVAVEPWRRKRLVKGFEEKVMEAIEKENGAQKEHAELEGKPAVEVTPPAVQTQRLTEELASEDQGENIPTFTSAAPSDLSSQEMQPGLPIQPEIEPEPEPEPEPEPIVEPPLTTILPPEASLSPDSWQQTFRDLFSERRVTLSQRDLTTVALESAAAGAAVMGVLIAIFRPR</sequence>